<sequence>MPVKIVLLGPPGAGKGTQAKSISNRYSIPHISTGDIFRKNISENTPLGIEAKSYMDNGQLVPDEVTINMVKDRLQQDDCKNGYLLDGFPRTVHQAEALDNFLTEREESIDTALLIEVPKEFILERMTGRRVCPSCGASYHIKFNPPTNDGKCDLCGSDVIQRKDDTEETVKERLDVYENQTQPLIDFYKNKKQLSVVDGTQAINEVFESICKILGSDK</sequence>
<reference key="1">
    <citation type="journal article" date="2002" name="Proc. Natl. Acad. Sci. U.S.A.">
        <title>Complete genome sequence of Clostridium perfringens, an anaerobic flesh-eater.</title>
        <authorList>
            <person name="Shimizu T."/>
            <person name="Ohtani K."/>
            <person name="Hirakawa H."/>
            <person name="Ohshima K."/>
            <person name="Yamashita A."/>
            <person name="Shiba T."/>
            <person name="Ogasawara N."/>
            <person name="Hattori M."/>
            <person name="Kuhara S."/>
            <person name="Hayashi H."/>
        </authorList>
    </citation>
    <scope>NUCLEOTIDE SEQUENCE [LARGE SCALE GENOMIC DNA]</scope>
    <source>
        <strain>13 / Type A</strain>
    </source>
</reference>
<keyword id="KW-0067">ATP-binding</keyword>
<keyword id="KW-0963">Cytoplasm</keyword>
<keyword id="KW-0418">Kinase</keyword>
<keyword id="KW-0479">Metal-binding</keyword>
<keyword id="KW-0545">Nucleotide biosynthesis</keyword>
<keyword id="KW-0547">Nucleotide-binding</keyword>
<keyword id="KW-1185">Reference proteome</keyword>
<keyword id="KW-0808">Transferase</keyword>
<keyword id="KW-0862">Zinc</keyword>
<feature type="chain" id="PRO_0000158758" description="Adenylate kinase">
    <location>
        <begin position="1"/>
        <end position="218"/>
    </location>
</feature>
<feature type="region of interest" description="NMP" evidence="1">
    <location>
        <begin position="32"/>
        <end position="61"/>
    </location>
</feature>
<feature type="region of interest" description="LID" evidence="1">
    <location>
        <begin position="128"/>
        <end position="165"/>
    </location>
</feature>
<feature type="binding site" evidence="1">
    <location>
        <begin position="12"/>
        <end position="17"/>
    </location>
    <ligand>
        <name>ATP</name>
        <dbReference type="ChEBI" id="CHEBI:30616"/>
    </ligand>
</feature>
<feature type="binding site" evidence="1">
    <location>
        <position position="33"/>
    </location>
    <ligand>
        <name>AMP</name>
        <dbReference type="ChEBI" id="CHEBI:456215"/>
    </ligand>
</feature>
<feature type="binding site" evidence="1">
    <location>
        <position position="38"/>
    </location>
    <ligand>
        <name>AMP</name>
        <dbReference type="ChEBI" id="CHEBI:456215"/>
    </ligand>
</feature>
<feature type="binding site" evidence="1">
    <location>
        <begin position="59"/>
        <end position="61"/>
    </location>
    <ligand>
        <name>AMP</name>
        <dbReference type="ChEBI" id="CHEBI:456215"/>
    </ligand>
</feature>
<feature type="binding site" evidence="1">
    <location>
        <begin position="87"/>
        <end position="90"/>
    </location>
    <ligand>
        <name>AMP</name>
        <dbReference type="ChEBI" id="CHEBI:456215"/>
    </ligand>
</feature>
<feature type="binding site" evidence="1">
    <location>
        <position position="94"/>
    </location>
    <ligand>
        <name>AMP</name>
        <dbReference type="ChEBI" id="CHEBI:456215"/>
    </ligand>
</feature>
<feature type="binding site" evidence="1">
    <location>
        <position position="129"/>
    </location>
    <ligand>
        <name>ATP</name>
        <dbReference type="ChEBI" id="CHEBI:30616"/>
    </ligand>
</feature>
<feature type="binding site" evidence="1">
    <location>
        <position position="132"/>
    </location>
    <ligand>
        <name>Zn(2+)</name>
        <dbReference type="ChEBI" id="CHEBI:29105"/>
        <note>structural</note>
    </ligand>
</feature>
<feature type="binding site" evidence="1">
    <location>
        <position position="135"/>
    </location>
    <ligand>
        <name>Zn(2+)</name>
        <dbReference type="ChEBI" id="CHEBI:29105"/>
        <note>structural</note>
    </ligand>
</feature>
<feature type="binding site" evidence="1">
    <location>
        <begin position="138"/>
        <end position="139"/>
    </location>
    <ligand>
        <name>ATP</name>
        <dbReference type="ChEBI" id="CHEBI:30616"/>
    </ligand>
</feature>
<feature type="binding site" evidence="1">
    <location>
        <position position="152"/>
    </location>
    <ligand>
        <name>Zn(2+)</name>
        <dbReference type="ChEBI" id="CHEBI:29105"/>
        <note>structural</note>
    </ligand>
</feature>
<feature type="binding site" evidence="1">
    <location>
        <position position="155"/>
    </location>
    <ligand>
        <name>Zn(2+)</name>
        <dbReference type="ChEBI" id="CHEBI:29105"/>
        <note>structural</note>
    </ligand>
</feature>
<feature type="binding site" evidence="1">
    <location>
        <position position="162"/>
    </location>
    <ligand>
        <name>AMP</name>
        <dbReference type="ChEBI" id="CHEBI:456215"/>
    </ligand>
</feature>
<feature type="binding site" evidence="1">
    <location>
        <position position="173"/>
    </location>
    <ligand>
        <name>AMP</name>
        <dbReference type="ChEBI" id="CHEBI:456215"/>
    </ligand>
</feature>
<feature type="binding site" evidence="1">
    <location>
        <position position="201"/>
    </location>
    <ligand>
        <name>ATP</name>
        <dbReference type="ChEBI" id="CHEBI:30616"/>
    </ligand>
</feature>
<dbReference type="EC" id="2.7.4.3" evidence="1"/>
<dbReference type="EMBL" id="BA000016">
    <property type="protein sequence ID" value="BAB82090.1"/>
    <property type="molecule type" value="Genomic_DNA"/>
</dbReference>
<dbReference type="SMR" id="Q8XHU4"/>
<dbReference type="STRING" id="195102.gene:10491701"/>
<dbReference type="KEGG" id="cpe:CPE2384"/>
<dbReference type="HOGENOM" id="CLU_032354_1_2_9"/>
<dbReference type="UniPathway" id="UPA00588">
    <property type="reaction ID" value="UER00649"/>
</dbReference>
<dbReference type="Proteomes" id="UP000000818">
    <property type="component" value="Chromosome"/>
</dbReference>
<dbReference type="GO" id="GO:0005737">
    <property type="term" value="C:cytoplasm"/>
    <property type="evidence" value="ECO:0007669"/>
    <property type="project" value="UniProtKB-SubCell"/>
</dbReference>
<dbReference type="GO" id="GO:0004017">
    <property type="term" value="F:adenylate kinase activity"/>
    <property type="evidence" value="ECO:0007669"/>
    <property type="project" value="UniProtKB-UniRule"/>
</dbReference>
<dbReference type="GO" id="GO:0005524">
    <property type="term" value="F:ATP binding"/>
    <property type="evidence" value="ECO:0007669"/>
    <property type="project" value="UniProtKB-UniRule"/>
</dbReference>
<dbReference type="GO" id="GO:0008270">
    <property type="term" value="F:zinc ion binding"/>
    <property type="evidence" value="ECO:0007669"/>
    <property type="project" value="UniProtKB-UniRule"/>
</dbReference>
<dbReference type="GO" id="GO:0044209">
    <property type="term" value="P:AMP salvage"/>
    <property type="evidence" value="ECO:0007669"/>
    <property type="project" value="UniProtKB-UniRule"/>
</dbReference>
<dbReference type="CDD" id="cd01428">
    <property type="entry name" value="ADK"/>
    <property type="match status" value="1"/>
</dbReference>
<dbReference type="FunFam" id="3.40.50.300:FF:000106">
    <property type="entry name" value="Adenylate kinase mitochondrial"/>
    <property type="match status" value="1"/>
</dbReference>
<dbReference type="Gene3D" id="3.40.50.300">
    <property type="entry name" value="P-loop containing nucleotide triphosphate hydrolases"/>
    <property type="match status" value="1"/>
</dbReference>
<dbReference type="HAMAP" id="MF_00235">
    <property type="entry name" value="Adenylate_kinase_Adk"/>
    <property type="match status" value="1"/>
</dbReference>
<dbReference type="InterPro" id="IPR006259">
    <property type="entry name" value="Adenyl_kin_sub"/>
</dbReference>
<dbReference type="InterPro" id="IPR000850">
    <property type="entry name" value="Adenylat/UMP-CMP_kin"/>
</dbReference>
<dbReference type="InterPro" id="IPR033690">
    <property type="entry name" value="Adenylat_kinase_CS"/>
</dbReference>
<dbReference type="InterPro" id="IPR007862">
    <property type="entry name" value="Adenylate_kinase_lid-dom"/>
</dbReference>
<dbReference type="InterPro" id="IPR027417">
    <property type="entry name" value="P-loop_NTPase"/>
</dbReference>
<dbReference type="NCBIfam" id="TIGR01351">
    <property type="entry name" value="adk"/>
    <property type="match status" value="1"/>
</dbReference>
<dbReference type="NCBIfam" id="NF001379">
    <property type="entry name" value="PRK00279.1-1"/>
    <property type="match status" value="1"/>
</dbReference>
<dbReference type="NCBIfam" id="NF001380">
    <property type="entry name" value="PRK00279.1-2"/>
    <property type="match status" value="1"/>
</dbReference>
<dbReference type="NCBIfam" id="NF001381">
    <property type="entry name" value="PRK00279.1-3"/>
    <property type="match status" value="1"/>
</dbReference>
<dbReference type="NCBIfam" id="NF011100">
    <property type="entry name" value="PRK14527.1"/>
    <property type="match status" value="1"/>
</dbReference>
<dbReference type="PANTHER" id="PTHR23359">
    <property type="entry name" value="NUCLEOTIDE KINASE"/>
    <property type="match status" value="1"/>
</dbReference>
<dbReference type="Pfam" id="PF00406">
    <property type="entry name" value="ADK"/>
    <property type="match status" value="1"/>
</dbReference>
<dbReference type="Pfam" id="PF05191">
    <property type="entry name" value="ADK_lid"/>
    <property type="match status" value="1"/>
</dbReference>
<dbReference type="PRINTS" id="PR00094">
    <property type="entry name" value="ADENYLTKNASE"/>
</dbReference>
<dbReference type="SUPFAM" id="SSF52540">
    <property type="entry name" value="P-loop containing nucleoside triphosphate hydrolases"/>
    <property type="match status" value="1"/>
</dbReference>
<dbReference type="PROSITE" id="PS00113">
    <property type="entry name" value="ADENYLATE_KINASE"/>
    <property type="match status" value="1"/>
</dbReference>
<protein>
    <recommendedName>
        <fullName evidence="1">Adenylate kinase</fullName>
        <shortName evidence="1">AK</shortName>
        <ecNumber evidence="1">2.7.4.3</ecNumber>
    </recommendedName>
    <alternativeName>
        <fullName evidence="1">ATP-AMP transphosphorylase</fullName>
    </alternativeName>
    <alternativeName>
        <fullName evidence="1">ATP:AMP phosphotransferase</fullName>
    </alternativeName>
    <alternativeName>
        <fullName evidence="1">Adenylate monophosphate kinase</fullName>
    </alternativeName>
</protein>
<gene>
    <name evidence="1" type="primary">adk</name>
    <name type="ordered locus">CPE2384</name>
</gene>
<evidence type="ECO:0000255" key="1">
    <source>
        <dbReference type="HAMAP-Rule" id="MF_00235"/>
    </source>
</evidence>
<comment type="function">
    <text evidence="1">Catalyzes the reversible transfer of the terminal phosphate group between ATP and AMP. Plays an important role in cellular energy homeostasis and in adenine nucleotide metabolism.</text>
</comment>
<comment type="catalytic activity">
    <reaction evidence="1">
        <text>AMP + ATP = 2 ADP</text>
        <dbReference type="Rhea" id="RHEA:12973"/>
        <dbReference type="ChEBI" id="CHEBI:30616"/>
        <dbReference type="ChEBI" id="CHEBI:456215"/>
        <dbReference type="ChEBI" id="CHEBI:456216"/>
        <dbReference type="EC" id="2.7.4.3"/>
    </reaction>
</comment>
<comment type="pathway">
    <text evidence="1">Purine metabolism; AMP biosynthesis via salvage pathway; AMP from ADP: step 1/1.</text>
</comment>
<comment type="subunit">
    <text evidence="1">Monomer.</text>
</comment>
<comment type="subcellular location">
    <subcellularLocation>
        <location evidence="1">Cytoplasm</location>
    </subcellularLocation>
</comment>
<comment type="domain">
    <text evidence="1">Consists of three domains, a large central CORE domain and two small peripheral domains, NMPbind and LID, which undergo movements during catalysis. The LID domain closes over the site of phosphoryl transfer upon ATP binding. Assembling and dissambling the active center during each catalytic cycle provides an effective means to prevent ATP hydrolysis. Some bacteria have evolved a zinc-coordinating structure that stabilizes the LID domain.</text>
</comment>
<comment type="similarity">
    <text evidence="1">Belongs to the adenylate kinase family.</text>
</comment>
<proteinExistence type="inferred from homology"/>
<organism>
    <name type="scientific">Clostridium perfringens (strain 13 / Type A)</name>
    <dbReference type="NCBI Taxonomy" id="195102"/>
    <lineage>
        <taxon>Bacteria</taxon>
        <taxon>Bacillati</taxon>
        <taxon>Bacillota</taxon>
        <taxon>Clostridia</taxon>
        <taxon>Eubacteriales</taxon>
        <taxon>Clostridiaceae</taxon>
        <taxon>Clostridium</taxon>
    </lineage>
</organism>
<accession>Q8XHU4</accession>
<name>KAD_CLOPE</name>